<feature type="signal peptide" evidence="5">
    <location>
        <begin position="1"/>
        <end position="16"/>
    </location>
</feature>
<feature type="chain" id="PRO_0000035670" description="Primary amine oxidase, lung isozyme">
    <location>
        <begin position="17"/>
        <end position="762"/>
    </location>
</feature>
<feature type="region of interest" description="Disordered" evidence="6">
    <location>
        <begin position="23"/>
        <end position="54"/>
    </location>
</feature>
<feature type="active site" description="Proton acceptor" evidence="3">
    <location>
        <position position="385"/>
    </location>
</feature>
<feature type="active site" description="Schiff-base intermediate with substrate; via topaquinone" evidence="3">
    <location>
        <position position="470"/>
    </location>
</feature>
<feature type="binding site" evidence="3">
    <location>
        <begin position="383"/>
        <end position="393"/>
    </location>
    <ligand>
        <name>substrate</name>
    </ligand>
</feature>
<feature type="binding site" evidence="3">
    <location>
        <begin position="467"/>
        <end position="472"/>
    </location>
    <ligand>
        <name>substrate</name>
    </ligand>
</feature>
<feature type="binding site" evidence="3">
    <location>
        <position position="519"/>
    </location>
    <ligand>
        <name>Cu cation</name>
        <dbReference type="ChEBI" id="CHEBI:23378"/>
    </ligand>
</feature>
<feature type="binding site" evidence="3">
    <location>
        <position position="521"/>
    </location>
    <ligand>
        <name>Cu cation</name>
        <dbReference type="ChEBI" id="CHEBI:23378"/>
    </ligand>
</feature>
<feature type="binding site" evidence="3">
    <location>
        <position position="528"/>
    </location>
    <ligand>
        <name>Ca(2+)</name>
        <dbReference type="ChEBI" id="CHEBI:29108"/>
        <label>1</label>
    </ligand>
</feature>
<feature type="binding site" evidence="3">
    <location>
        <position position="529"/>
    </location>
    <ligand>
        <name>Ca(2+)</name>
        <dbReference type="ChEBI" id="CHEBI:29108"/>
        <label>1</label>
    </ligand>
</feature>
<feature type="binding site" evidence="3">
    <location>
        <position position="530"/>
    </location>
    <ligand>
        <name>Ca(2+)</name>
        <dbReference type="ChEBI" id="CHEBI:29108"/>
        <label>1</label>
    </ligand>
</feature>
<feature type="binding site" evidence="3">
    <location>
        <position position="571"/>
    </location>
    <ligand>
        <name>Ca(2+)</name>
        <dbReference type="ChEBI" id="CHEBI:29108"/>
        <label>2</label>
    </ligand>
</feature>
<feature type="binding site" evidence="1">
    <location>
        <begin position="577"/>
        <end position="584"/>
    </location>
    <ligand>
        <name>heparin</name>
        <dbReference type="ChEBI" id="CHEBI:28304"/>
    </ligand>
</feature>
<feature type="binding site" evidence="3">
    <location>
        <position position="662"/>
    </location>
    <ligand>
        <name>Ca(2+)</name>
        <dbReference type="ChEBI" id="CHEBI:29108"/>
        <label>2</label>
    </ligand>
</feature>
<feature type="binding site" evidence="3">
    <location>
        <position position="664"/>
    </location>
    <ligand>
        <name>Ca(2+)</name>
        <dbReference type="ChEBI" id="CHEBI:29108"/>
        <label>2</label>
    </ligand>
</feature>
<feature type="binding site" evidence="3">
    <location>
        <position position="666"/>
    </location>
    <ligand>
        <name>Ca(2+)</name>
        <dbReference type="ChEBI" id="CHEBI:29108"/>
        <label>2</label>
    </ligand>
</feature>
<feature type="binding site" evidence="3">
    <location>
        <position position="672"/>
    </location>
    <ligand>
        <name>Ca(2+)</name>
        <dbReference type="ChEBI" id="CHEBI:29108"/>
        <label>1</label>
    </ligand>
</feature>
<feature type="binding site" evidence="3">
    <location>
        <position position="673"/>
    </location>
    <ligand>
        <name>Ca(2+)</name>
        <dbReference type="ChEBI" id="CHEBI:29108"/>
        <label>1</label>
    </ligand>
</feature>
<feature type="binding site" evidence="3">
    <location>
        <position position="683"/>
    </location>
    <ligand>
        <name>Cu cation</name>
        <dbReference type="ChEBI" id="CHEBI:23378"/>
    </ligand>
</feature>
<feature type="modified residue" description="2',4',5'-topaquinone" evidence="2">
    <location>
        <position position="470"/>
    </location>
</feature>
<feature type="glycosylation site" description="N-linked (GlcNAc...) asparagine" evidence="3">
    <location>
        <position position="136"/>
    </location>
</feature>
<feature type="glycosylation site" description="O-linked (GalNAc...) threonine" evidence="4">
    <location>
        <position position="211"/>
    </location>
</feature>
<feature type="glycosylation site" description="N-linked (GlcNAc...) asparagine" evidence="4">
    <location>
        <position position="231"/>
    </location>
</feature>
<feature type="glycosylation site" description="N-linked (GlcNAc...) asparagine" evidence="4">
    <location>
        <position position="293"/>
    </location>
</feature>
<feature type="glycosylation site" description="N-linked (GlcNAc...) asparagine" evidence="4">
    <location>
        <position position="617"/>
    </location>
</feature>
<feature type="glycosylation site" description="N-linked (GlcNAc...) asparagine" evidence="4">
    <location>
        <position position="665"/>
    </location>
</feature>
<feature type="disulfide bond" evidence="4">
    <location>
        <begin position="197"/>
        <end position="198"/>
    </location>
</feature>
<feature type="disulfide bond" evidence="3">
    <location>
        <begin position="403"/>
        <end position="429"/>
    </location>
</feature>
<feature type="disulfide bond" evidence="4">
    <location>
        <begin position="733"/>
        <end position="740"/>
    </location>
</feature>
<feature type="disulfide bond" description="Interchain" evidence="3">
    <location>
        <position position="747"/>
    </location>
</feature>
<evidence type="ECO:0000250" key="1"/>
<evidence type="ECO:0000250" key="2">
    <source>
        <dbReference type="UniProtKB" id="P12807"/>
    </source>
</evidence>
<evidence type="ECO:0000250" key="3">
    <source>
        <dbReference type="UniProtKB" id="P19801"/>
    </source>
</evidence>
<evidence type="ECO:0000250" key="4">
    <source>
        <dbReference type="UniProtKB" id="Q16853"/>
    </source>
</evidence>
<evidence type="ECO:0000255" key="5"/>
<evidence type="ECO:0000256" key="6">
    <source>
        <dbReference type="SAM" id="MobiDB-lite"/>
    </source>
</evidence>
<evidence type="ECO:0000305" key="7"/>
<sequence length="762" mass="84883">MFIFIFLSLWTLLVMGREEGGVGSEEGVGKQCHPSLPPRCPSRSPSDQPWTHPDQSQLFADLSREELTAVMSFLTQKLGPDLVDAAQARPSDNCIFSVELQLPPKAAALAHLDRRSPPPAREALAIVFFGGQPQPNVTELVVGPLPQPSYMRDVTVERHGGPLPYYRHTVLLREYLDIDQMIFNRELPQAAGVLHHCCSYKQGGGNLVTMTTAPPGLQSGDRATWFGLYYNISKAGYYLHPVGLELLVDHKALDPAQWTIQKVFFQGRYYESLVQLEEQFEAGRVNVVVIPNNGTGGSWSLKSQVPPGPTPPLQFHPQGTRFSVQGSRVTSSLWTFSFGLGAFSGPRIFDIRFQGERLAYEISLQEAVAIYGGNTPAAMLTRYMDACFGMGKFATPLTRGVDCPYLATYVDWHFLLESQAPKTLHDAFCVFEQNKGLPLRRHHSDFISQYFGGVVETVLVFRSVSTLLNYDYVWDMVFHPNGAIEVKFHVTGYISSAFFFGTAQKYGNQVRENTLGTVHTHSAHYKVDLDVGGLENWVWAEDMAFVPTTVPWSPEHQIQRLQVIRKQLETEEQAAFPLGGGSPRYLYLASKQSNKWGHPRGYRIQTVSFAGRPLPQNSSTERAISWGRYQLAVTQRKETEPSSSSVFNQNDPWTPTVDFADFINNETIAGKDLVAWVTAGFLHIPHAEDIPNTVTVGNGVGFFLRPYNFFDQEPSMDSADSIYFREGQDAGSCEINPLACLPQAATCAPDLPVFSHGGYPEY</sequence>
<proteinExistence type="evidence at transcript level"/>
<comment type="catalytic activity">
    <reaction evidence="3">
        <text>a primary methyl amine + O2 + H2O = an aldehyde + H2O2 + NH4(+)</text>
        <dbReference type="Rhea" id="RHEA:16153"/>
        <dbReference type="ChEBI" id="CHEBI:15377"/>
        <dbReference type="ChEBI" id="CHEBI:15379"/>
        <dbReference type="ChEBI" id="CHEBI:16240"/>
        <dbReference type="ChEBI" id="CHEBI:17478"/>
        <dbReference type="ChEBI" id="CHEBI:28938"/>
        <dbReference type="ChEBI" id="CHEBI:228804"/>
        <dbReference type="EC" id="1.4.3.21"/>
    </reaction>
</comment>
<comment type="cofactor">
    <cofactor evidence="3">
        <name>Cu cation</name>
        <dbReference type="ChEBI" id="CHEBI:23378"/>
    </cofactor>
    <text evidence="3">Binds 1 copper ion per subunit.</text>
</comment>
<comment type="cofactor">
    <cofactor evidence="3">
        <name>Ca(2+)</name>
        <dbReference type="ChEBI" id="CHEBI:29108"/>
    </cofactor>
    <text evidence="3">Binds 2 calcium ions per subunit.</text>
</comment>
<comment type="cofactor">
    <cofactor evidence="3">
        <name>L-topaquinone</name>
        <dbReference type="ChEBI" id="CHEBI:79027"/>
    </cofactor>
    <text evidence="3">Contains 1 topaquinone per subunit.</text>
</comment>
<comment type="subunit">
    <text evidence="3">Homodimer; disulfide-linked.</text>
</comment>
<comment type="subcellular location">
    <subcellularLocation>
        <location evidence="1">Secreted</location>
        <location evidence="1">Extracellular space</location>
    </subcellularLocation>
</comment>
<comment type="tissue specificity">
    <text>Expressed in lung, spleen, heart and kidney.</text>
</comment>
<comment type="PTM">
    <text evidence="2">Topaquinone (TPQ) is generated by copper-dependent autoxidation of a specific tyrosyl residue.</text>
</comment>
<comment type="miscellaneous">
    <text evidence="1">Inhibited by amiloride in a competitive manner.</text>
</comment>
<comment type="similarity">
    <text evidence="7">Belongs to the copper/topaquinone oxidase family.</text>
</comment>
<reference key="1">
    <citation type="journal article" date="1998" name="Eur. J. Biochem.">
        <title>Structure and tissue-specific expression of genes encoding bovine copper amine oxidases.</title>
        <authorList>
            <person name="Hogdall E.V.S."/>
            <person name="Houen G."/>
            <person name="Borre M."/>
            <person name="Bundgaard J.R."/>
            <person name="Larsson L.-I."/>
            <person name="Vuust J."/>
        </authorList>
    </citation>
    <scope>NUCLEOTIDE SEQUENCE [MRNA]</scope>
    <source>
        <tissue>Lung</tissue>
    </source>
</reference>
<dbReference type="EC" id="1.4.3.21" evidence="3"/>
<dbReference type="EMBL" id="Y15774">
    <property type="protein sequence ID" value="CAA75776.1"/>
    <property type="molecule type" value="mRNA"/>
</dbReference>
<dbReference type="SMR" id="O46406"/>
<dbReference type="FunCoup" id="O46406">
    <property type="interactions" value="167"/>
</dbReference>
<dbReference type="GlyGen" id="O46406">
    <property type="glycosylation" value="6 sites"/>
</dbReference>
<dbReference type="PeptideAtlas" id="O46406"/>
<dbReference type="InParanoid" id="O46406"/>
<dbReference type="Proteomes" id="UP000009136">
    <property type="component" value="Unplaced"/>
</dbReference>
<dbReference type="GO" id="GO:0005769">
    <property type="term" value="C:early endosome"/>
    <property type="evidence" value="ECO:0000318"/>
    <property type="project" value="GO_Central"/>
</dbReference>
<dbReference type="GO" id="GO:0005783">
    <property type="term" value="C:endoplasmic reticulum"/>
    <property type="evidence" value="ECO:0000318"/>
    <property type="project" value="GO_Central"/>
</dbReference>
<dbReference type="GO" id="GO:0005576">
    <property type="term" value="C:extracellular region"/>
    <property type="evidence" value="ECO:0007669"/>
    <property type="project" value="UniProtKB-SubCell"/>
</dbReference>
<dbReference type="GO" id="GO:0005794">
    <property type="term" value="C:Golgi apparatus"/>
    <property type="evidence" value="ECO:0000318"/>
    <property type="project" value="GO_Central"/>
</dbReference>
<dbReference type="GO" id="GO:0005886">
    <property type="term" value="C:plasma membrane"/>
    <property type="evidence" value="ECO:0000318"/>
    <property type="project" value="GO_Central"/>
</dbReference>
<dbReference type="GO" id="GO:0005507">
    <property type="term" value="F:copper ion binding"/>
    <property type="evidence" value="ECO:0000318"/>
    <property type="project" value="GO_Central"/>
</dbReference>
<dbReference type="GO" id="GO:0008131">
    <property type="term" value="F:primary methylamine oxidase activity"/>
    <property type="evidence" value="ECO:0007669"/>
    <property type="project" value="UniProtKB-EC"/>
</dbReference>
<dbReference type="GO" id="GO:0048038">
    <property type="term" value="F:quinone binding"/>
    <property type="evidence" value="ECO:0007669"/>
    <property type="project" value="InterPro"/>
</dbReference>
<dbReference type="GO" id="GO:0009308">
    <property type="term" value="P:amine metabolic process"/>
    <property type="evidence" value="ECO:0000318"/>
    <property type="project" value="GO_Central"/>
</dbReference>
<dbReference type="FunFam" id="2.70.98.20:FF:000003">
    <property type="entry name" value="Amine oxidase"/>
    <property type="match status" value="1"/>
</dbReference>
<dbReference type="FunFam" id="3.10.450.40:FF:000001">
    <property type="entry name" value="Amine oxidase"/>
    <property type="match status" value="1"/>
</dbReference>
<dbReference type="FunFam" id="3.10.450.40:FF:000003">
    <property type="entry name" value="Amine oxidase"/>
    <property type="match status" value="1"/>
</dbReference>
<dbReference type="Gene3D" id="3.10.450.40">
    <property type="match status" value="2"/>
</dbReference>
<dbReference type="Gene3D" id="2.70.98.20">
    <property type="entry name" value="Copper amine oxidase, catalytic domain"/>
    <property type="match status" value="1"/>
</dbReference>
<dbReference type="InterPro" id="IPR049947">
    <property type="entry name" value="Cu_Am_Ox_Cu-bd"/>
</dbReference>
<dbReference type="InterPro" id="IPR049948">
    <property type="entry name" value="Cu_Am_ox_TPQ-bd"/>
</dbReference>
<dbReference type="InterPro" id="IPR000269">
    <property type="entry name" value="Cu_amine_oxidase"/>
</dbReference>
<dbReference type="InterPro" id="IPR015798">
    <property type="entry name" value="Cu_amine_oxidase_C"/>
</dbReference>
<dbReference type="InterPro" id="IPR036460">
    <property type="entry name" value="Cu_amine_oxidase_C_sf"/>
</dbReference>
<dbReference type="InterPro" id="IPR016182">
    <property type="entry name" value="Cu_amine_oxidase_N-reg"/>
</dbReference>
<dbReference type="InterPro" id="IPR015800">
    <property type="entry name" value="Cu_amine_oxidase_N2"/>
</dbReference>
<dbReference type="InterPro" id="IPR015802">
    <property type="entry name" value="Cu_amine_oxidase_N3"/>
</dbReference>
<dbReference type="PANTHER" id="PTHR10638">
    <property type="entry name" value="COPPER AMINE OXIDASE"/>
    <property type="match status" value="1"/>
</dbReference>
<dbReference type="PANTHER" id="PTHR10638:SF23">
    <property type="entry name" value="MEMBRANE PRIMARY AMINE OXIDASE"/>
    <property type="match status" value="1"/>
</dbReference>
<dbReference type="Pfam" id="PF01179">
    <property type="entry name" value="Cu_amine_oxid"/>
    <property type="match status" value="1"/>
</dbReference>
<dbReference type="Pfam" id="PF02727">
    <property type="entry name" value="Cu_amine_oxidN2"/>
    <property type="match status" value="1"/>
</dbReference>
<dbReference type="Pfam" id="PF02728">
    <property type="entry name" value="Cu_amine_oxidN3"/>
    <property type="match status" value="1"/>
</dbReference>
<dbReference type="PRINTS" id="PR00766">
    <property type="entry name" value="CUDAOXIDASE"/>
</dbReference>
<dbReference type="SUPFAM" id="SSF49998">
    <property type="entry name" value="Amine oxidase catalytic domain"/>
    <property type="match status" value="1"/>
</dbReference>
<dbReference type="SUPFAM" id="SSF54416">
    <property type="entry name" value="Amine oxidase N-terminal region"/>
    <property type="match status" value="2"/>
</dbReference>
<dbReference type="PROSITE" id="PS01164">
    <property type="entry name" value="COPPER_AMINE_OXID_1"/>
    <property type="match status" value="1"/>
</dbReference>
<dbReference type="PROSITE" id="PS01165">
    <property type="entry name" value="COPPER_AMINE_OXID_2"/>
    <property type="match status" value="1"/>
</dbReference>
<organism>
    <name type="scientific">Bos taurus</name>
    <name type="common">Bovine</name>
    <dbReference type="NCBI Taxonomy" id="9913"/>
    <lineage>
        <taxon>Eukaryota</taxon>
        <taxon>Metazoa</taxon>
        <taxon>Chordata</taxon>
        <taxon>Craniata</taxon>
        <taxon>Vertebrata</taxon>
        <taxon>Euteleostomi</taxon>
        <taxon>Mammalia</taxon>
        <taxon>Eutheria</taxon>
        <taxon>Laurasiatheria</taxon>
        <taxon>Artiodactyla</taxon>
        <taxon>Ruminantia</taxon>
        <taxon>Pecora</taxon>
        <taxon>Bovidae</taxon>
        <taxon>Bovinae</taxon>
        <taxon>Bos</taxon>
    </lineage>
</organism>
<name>AOCY_BOVIN</name>
<protein>
    <recommendedName>
        <fullName>Primary amine oxidase, lung isozyme</fullName>
        <ecNumber evidence="3">1.4.3.21</ecNumber>
    </recommendedName>
    <alternativeName>
        <fullName>Amine oxidase [copper-containing]</fullName>
    </alternativeName>
    <alternativeName>
        <fullName>BOLAO</fullName>
    </alternativeName>
    <alternativeName>
        <fullName>Copper amine oxidase</fullName>
    </alternativeName>
</protein>
<accession>O46406</accession>
<keyword id="KW-0106">Calcium</keyword>
<keyword id="KW-0186">Copper</keyword>
<keyword id="KW-1015">Disulfide bond</keyword>
<keyword id="KW-0325">Glycoprotein</keyword>
<keyword id="KW-0479">Metal-binding</keyword>
<keyword id="KW-0560">Oxidoreductase</keyword>
<keyword id="KW-1185">Reference proteome</keyword>
<keyword id="KW-0964">Secreted</keyword>
<keyword id="KW-0732">Signal</keyword>
<keyword id="KW-0801">TPQ</keyword>